<evidence type="ECO:0000255" key="1">
    <source>
        <dbReference type="HAMAP-Rule" id="MF_01897"/>
    </source>
</evidence>
<evidence type="ECO:0000255" key="2">
    <source>
        <dbReference type="PROSITE-ProRule" id="PRU01384"/>
    </source>
</evidence>
<evidence type="ECO:0000256" key="3">
    <source>
        <dbReference type="SAM" id="MobiDB-lite"/>
    </source>
</evidence>
<reference key="1">
    <citation type="journal article" date="2003" name="Mol. Microbiol.">
        <title>Genome-based analysis of virulence genes in a non-biofilm-forming Staphylococcus epidermidis strain (ATCC 12228).</title>
        <authorList>
            <person name="Zhang Y.-Q."/>
            <person name="Ren S.-X."/>
            <person name="Li H.-L."/>
            <person name="Wang Y.-X."/>
            <person name="Fu G."/>
            <person name="Yang J."/>
            <person name="Qin Z.-Q."/>
            <person name="Miao Y.-G."/>
            <person name="Wang W.-Y."/>
            <person name="Chen R.-S."/>
            <person name="Shen Y."/>
            <person name="Chen Z."/>
            <person name="Yuan Z.-H."/>
            <person name="Zhao G.-P."/>
            <person name="Qu D."/>
            <person name="Danchin A."/>
            <person name="Wen Y.-M."/>
        </authorList>
    </citation>
    <scope>NUCLEOTIDE SEQUENCE [LARGE SCALE GENOMIC DNA]</scope>
    <source>
        <strain>ATCC 12228 / FDA PCI 1200</strain>
    </source>
</reference>
<accession>P0C0R0</accession>
<accession>P54112</accession>
<dbReference type="EC" id="5.6.2.2" evidence="1"/>
<dbReference type="EMBL" id="AE015929">
    <property type="protein sequence ID" value="AAO03602.1"/>
    <property type="molecule type" value="Genomic_DNA"/>
</dbReference>
<dbReference type="RefSeq" id="NP_763560.1">
    <property type="nucleotide sequence ID" value="NC_004461.1"/>
</dbReference>
<dbReference type="RefSeq" id="WP_001831812.1">
    <property type="nucleotide sequence ID" value="NZ_WBME01000012.1"/>
</dbReference>
<dbReference type="SMR" id="P0C0R0"/>
<dbReference type="GeneID" id="50017420"/>
<dbReference type="KEGG" id="sep:SE_0005"/>
<dbReference type="PATRIC" id="fig|176280.10.peg.6"/>
<dbReference type="eggNOG" id="COG0188">
    <property type="taxonomic scope" value="Bacteria"/>
</dbReference>
<dbReference type="HOGENOM" id="CLU_002977_6_1_9"/>
<dbReference type="OrthoDB" id="9806486at2"/>
<dbReference type="Proteomes" id="UP000001411">
    <property type="component" value="Chromosome"/>
</dbReference>
<dbReference type="GO" id="GO:0005694">
    <property type="term" value="C:chromosome"/>
    <property type="evidence" value="ECO:0007669"/>
    <property type="project" value="InterPro"/>
</dbReference>
<dbReference type="GO" id="GO:0005737">
    <property type="term" value="C:cytoplasm"/>
    <property type="evidence" value="ECO:0007669"/>
    <property type="project" value="UniProtKB-SubCell"/>
</dbReference>
<dbReference type="GO" id="GO:0009330">
    <property type="term" value="C:DNA topoisomerase type II (double strand cut, ATP-hydrolyzing) complex"/>
    <property type="evidence" value="ECO:0007669"/>
    <property type="project" value="TreeGrafter"/>
</dbReference>
<dbReference type="GO" id="GO:0005524">
    <property type="term" value="F:ATP binding"/>
    <property type="evidence" value="ECO:0007669"/>
    <property type="project" value="UniProtKB-UniRule"/>
</dbReference>
<dbReference type="GO" id="GO:0003677">
    <property type="term" value="F:DNA binding"/>
    <property type="evidence" value="ECO:0007669"/>
    <property type="project" value="UniProtKB-UniRule"/>
</dbReference>
<dbReference type="GO" id="GO:0034335">
    <property type="term" value="F:DNA negative supercoiling activity"/>
    <property type="evidence" value="ECO:0007669"/>
    <property type="project" value="UniProtKB-ARBA"/>
</dbReference>
<dbReference type="GO" id="GO:0006265">
    <property type="term" value="P:DNA topological change"/>
    <property type="evidence" value="ECO:0007669"/>
    <property type="project" value="UniProtKB-UniRule"/>
</dbReference>
<dbReference type="GO" id="GO:0006261">
    <property type="term" value="P:DNA-templated DNA replication"/>
    <property type="evidence" value="ECO:0007669"/>
    <property type="project" value="UniProtKB-UniRule"/>
</dbReference>
<dbReference type="CDD" id="cd00187">
    <property type="entry name" value="TOP4c"/>
    <property type="match status" value="1"/>
</dbReference>
<dbReference type="FunFam" id="1.10.268.10:FF:000001">
    <property type="entry name" value="DNA gyrase subunit A"/>
    <property type="match status" value="1"/>
</dbReference>
<dbReference type="FunFam" id="2.120.10.90:FF:000004">
    <property type="entry name" value="DNA gyrase subunit A"/>
    <property type="match status" value="1"/>
</dbReference>
<dbReference type="FunFam" id="3.30.1360.40:FF:000002">
    <property type="entry name" value="DNA gyrase subunit A"/>
    <property type="match status" value="1"/>
</dbReference>
<dbReference type="FunFam" id="3.90.199.10:FF:000001">
    <property type="entry name" value="DNA gyrase subunit A"/>
    <property type="match status" value="1"/>
</dbReference>
<dbReference type="Gene3D" id="3.30.1360.40">
    <property type="match status" value="1"/>
</dbReference>
<dbReference type="Gene3D" id="2.120.10.90">
    <property type="entry name" value="DNA gyrase/topoisomerase IV, subunit A, C-terminal"/>
    <property type="match status" value="1"/>
</dbReference>
<dbReference type="Gene3D" id="3.90.199.10">
    <property type="entry name" value="Topoisomerase II, domain 5"/>
    <property type="match status" value="1"/>
</dbReference>
<dbReference type="Gene3D" id="1.10.268.10">
    <property type="entry name" value="Topoisomerase, domain 3"/>
    <property type="match status" value="1"/>
</dbReference>
<dbReference type="HAMAP" id="MF_01897">
    <property type="entry name" value="GyrA"/>
    <property type="match status" value="1"/>
</dbReference>
<dbReference type="InterPro" id="IPR005743">
    <property type="entry name" value="GyrA"/>
</dbReference>
<dbReference type="InterPro" id="IPR006691">
    <property type="entry name" value="GyrA/parC_rep"/>
</dbReference>
<dbReference type="InterPro" id="IPR035516">
    <property type="entry name" value="Gyrase/topoIV_suA_C"/>
</dbReference>
<dbReference type="InterPro" id="IPR013760">
    <property type="entry name" value="Topo_IIA-like_dom_sf"/>
</dbReference>
<dbReference type="InterPro" id="IPR013758">
    <property type="entry name" value="Topo_IIA_A/C_ab"/>
</dbReference>
<dbReference type="InterPro" id="IPR013757">
    <property type="entry name" value="Topo_IIA_A_a_sf"/>
</dbReference>
<dbReference type="InterPro" id="IPR002205">
    <property type="entry name" value="Topo_IIA_dom_A"/>
</dbReference>
<dbReference type="InterPro" id="IPR050220">
    <property type="entry name" value="Type_II_DNA_Topoisomerases"/>
</dbReference>
<dbReference type="NCBIfam" id="TIGR01063">
    <property type="entry name" value="gyrA"/>
    <property type="match status" value="1"/>
</dbReference>
<dbReference type="NCBIfam" id="NF004043">
    <property type="entry name" value="PRK05560.1"/>
    <property type="match status" value="1"/>
</dbReference>
<dbReference type="NCBIfam" id="NF004044">
    <property type="entry name" value="PRK05561.1"/>
    <property type="match status" value="1"/>
</dbReference>
<dbReference type="PANTHER" id="PTHR43493:SF5">
    <property type="entry name" value="DNA GYRASE SUBUNIT A, CHLOROPLASTIC_MITOCHONDRIAL"/>
    <property type="match status" value="1"/>
</dbReference>
<dbReference type="PANTHER" id="PTHR43493">
    <property type="entry name" value="DNA GYRASE/TOPOISOMERASE SUBUNIT A"/>
    <property type="match status" value="1"/>
</dbReference>
<dbReference type="Pfam" id="PF03989">
    <property type="entry name" value="DNA_gyraseA_C"/>
    <property type="match status" value="6"/>
</dbReference>
<dbReference type="Pfam" id="PF00521">
    <property type="entry name" value="DNA_topoisoIV"/>
    <property type="match status" value="1"/>
</dbReference>
<dbReference type="SMART" id="SM00434">
    <property type="entry name" value="TOP4c"/>
    <property type="match status" value="1"/>
</dbReference>
<dbReference type="SUPFAM" id="SSF101904">
    <property type="entry name" value="GyrA/ParC C-terminal domain-like"/>
    <property type="match status" value="1"/>
</dbReference>
<dbReference type="SUPFAM" id="SSF56719">
    <property type="entry name" value="Type II DNA topoisomerase"/>
    <property type="match status" value="1"/>
</dbReference>
<dbReference type="PROSITE" id="PS52040">
    <property type="entry name" value="TOPO_IIA"/>
    <property type="match status" value="1"/>
</dbReference>
<sequence length="893" mass="100114">MAELPQSRINERNITSEMRESFLDYAMSVIVSRALPDVRDGLKPVHRRILYGLNEQGMTPDKPYKKSARIVGDVMGKYHPHGDSSIYEAMVRMAQDFSYRYPLVDGQGNFGSMDGDGAAAMRYTEARMTKITLELLRDINKDTIDFIDNYDGNEREPSVLPARFPNLLVNGAAGIAVGMATNIPPHNLTEVIDGVLSLSKNPDITINELMEDIQGPDFPTAGLVLGKSGIRRAYETGRGSIQMRSRAEIEERGGGRQRIVVTEIPFQVNKARMIEKIAELVRDKKIDGITDLRDETSLRTGVRVVIDVRKDANASVILNNLYKQTPLQTSFGVNMIALVNGRPKLINLKEALIHYLEHQKTVVRRRTEYNLKKARDRAHILEGLRIALDHIDEIITTIRESDTDKIAMASLQERFKLTERQAQAILDMRLRRLTGLERDKIESEYNELLEYIKELEEILADEEVLLQLVRDELTEIKERFGDERRTEIQLGGLEDLEDEDLIPEEQIVITLSHNNYIKRLPVSTYRSQNRGGRGIQGMNTLDEDFVSQLVTMSTHDHVLFFTNKGRVYKLKGYEVPELSRQSKGIPIINAIELENDETISTMIAVKDLESEEDYLVFATKQGIVKRSSLSNFSRINKNGKIAINFKEDDELIAVRLTTGNEDILIGTAHASLIRFSESTLRPLGRTAAGVKGISLREGDTVVGLDVADSESEDEVLVVTENGYGKRTPVSEYRLSNRGGKGIKTATITERNGNIVCITTVTGEEDLMVVTNAGVIIRLDVHDISQNGRAAQGVRLMKLGDGQFVSTVAKVNEEDDNEENADEAQQSTTTETADVEEVVDDQTPGNAIHTEGDAEMESVESPENDDRIDIRQDFMDRVNEDIESASDNEEDSDE</sequence>
<gene>
    <name evidence="1" type="primary">gyrA</name>
    <name type="ordered locus">SE_0005</name>
</gene>
<comment type="function">
    <text evidence="1">A type II topoisomerase that negatively supercoils closed circular double-stranded (ds) DNA in an ATP-dependent manner to modulate DNA topology and maintain chromosomes in an underwound state. Negative supercoiling favors strand separation, and DNA replication, transcription, recombination and repair, all of which involve strand separation. Also able to catalyze the interconversion of other topological isomers of dsDNA rings, including catenanes and knotted rings. Type II topoisomerases break and join 2 DNA strands simultaneously in an ATP-dependent manner.</text>
</comment>
<comment type="catalytic activity">
    <reaction evidence="1">
        <text>ATP-dependent breakage, passage and rejoining of double-stranded DNA.</text>
        <dbReference type="EC" id="5.6.2.2"/>
    </reaction>
</comment>
<comment type="subunit">
    <text evidence="1">Heterotetramer, composed of two GyrA and two GyrB chains. In the heterotetramer, GyrA contains the active site tyrosine that forms a transient covalent intermediate with DNA, while GyrB binds cofactors and catalyzes ATP hydrolysis.</text>
</comment>
<comment type="subcellular location">
    <subcellularLocation>
        <location evidence="1">Cytoplasm</location>
    </subcellularLocation>
</comment>
<comment type="miscellaneous">
    <text evidence="1">Few gyrases are as efficient as E.coli at forming negative supercoils. Not all organisms have 2 type II topoisomerases; in organisms with a single type II topoisomerase this enzyme also has to decatenate newly replicated chromosomes.</text>
</comment>
<comment type="similarity">
    <text evidence="1">Belongs to the type II topoisomerase GyrA/ParC subunit family.</text>
</comment>
<keyword id="KW-0067">ATP-binding</keyword>
<keyword id="KW-0963">Cytoplasm</keyword>
<keyword id="KW-0238">DNA-binding</keyword>
<keyword id="KW-0413">Isomerase</keyword>
<keyword id="KW-0547">Nucleotide-binding</keyword>
<keyword id="KW-0799">Topoisomerase</keyword>
<protein>
    <recommendedName>
        <fullName evidence="1">DNA gyrase subunit A</fullName>
        <ecNumber evidence="1">5.6.2.2</ecNumber>
    </recommendedName>
</protein>
<proteinExistence type="inferred from homology"/>
<organism>
    <name type="scientific">Staphylococcus epidermidis (strain ATCC 12228 / FDA PCI 1200)</name>
    <dbReference type="NCBI Taxonomy" id="176280"/>
    <lineage>
        <taxon>Bacteria</taxon>
        <taxon>Bacillati</taxon>
        <taxon>Bacillota</taxon>
        <taxon>Bacilli</taxon>
        <taxon>Bacillales</taxon>
        <taxon>Staphylococcaceae</taxon>
        <taxon>Staphylococcus</taxon>
    </lineage>
</organism>
<name>GYRA_STAES</name>
<feature type="chain" id="PRO_0000145259" description="DNA gyrase subunit A">
    <location>
        <begin position="1"/>
        <end position="893"/>
    </location>
</feature>
<feature type="domain" description="Topo IIA-type catalytic" evidence="2">
    <location>
        <begin position="35"/>
        <end position="501"/>
    </location>
</feature>
<feature type="region of interest" description="Disordered" evidence="3">
    <location>
        <begin position="810"/>
        <end position="893"/>
    </location>
</feature>
<feature type="short sequence motif" description="GyrA-box" evidence="1">
    <location>
        <begin position="528"/>
        <end position="534"/>
    </location>
</feature>
<feature type="compositionally biased region" description="Acidic residues" evidence="3">
    <location>
        <begin position="812"/>
        <end position="821"/>
    </location>
</feature>
<feature type="compositionally biased region" description="Acidic residues" evidence="3">
    <location>
        <begin position="852"/>
        <end position="862"/>
    </location>
</feature>
<feature type="compositionally biased region" description="Basic and acidic residues" evidence="3">
    <location>
        <begin position="863"/>
        <end position="879"/>
    </location>
</feature>
<feature type="compositionally biased region" description="Acidic residues" evidence="3">
    <location>
        <begin position="880"/>
        <end position="893"/>
    </location>
</feature>
<feature type="active site" description="O-(5'-phospho-DNA)-tyrosine intermediate" evidence="1">
    <location>
        <position position="123"/>
    </location>
</feature>